<protein>
    <recommendedName>
        <fullName evidence="1">Erythronate-4-phosphate dehydrogenase</fullName>
        <ecNumber evidence="1">1.1.1.290</ecNumber>
    </recommendedName>
</protein>
<accession>Q7MV70</accession>
<organism>
    <name type="scientific">Porphyromonas gingivalis (strain ATCC BAA-308 / W83)</name>
    <dbReference type="NCBI Taxonomy" id="242619"/>
    <lineage>
        <taxon>Bacteria</taxon>
        <taxon>Pseudomonadati</taxon>
        <taxon>Bacteroidota</taxon>
        <taxon>Bacteroidia</taxon>
        <taxon>Bacteroidales</taxon>
        <taxon>Porphyromonadaceae</taxon>
        <taxon>Porphyromonas</taxon>
    </lineage>
</organism>
<gene>
    <name evidence="1" type="primary">pdxB</name>
    <name type="ordered locus">PG_1220</name>
</gene>
<dbReference type="EC" id="1.1.1.290" evidence="1"/>
<dbReference type="EMBL" id="AE015924">
    <property type="protein sequence ID" value="AAQ66310.1"/>
    <property type="status" value="ALT_INIT"/>
    <property type="molecule type" value="Genomic_DNA"/>
</dbReference>
<dbReference type="RefSeq" id="WP_005875001.1">
    <property type="nucleotide sequence ID" value="NC_002950.2"/>
</dbReference>
<dbReference type="SMR" id="Q7MV70"/>
<dbReference type="STRING" id="242619.PG_1220"/>
<dbReference type="EnsemblBacteria" id="AAQ66310">
    <property type="protein sequence ID" value="AAQ66310"/>
    <property type="gene ID" value="PG_1220"/>
</dbReference>
<dbReference type="KEGG" id="pgi:PG_1220"/>
<dbReference type="PATRIC" id="fig|242619.8.peg.1133"/>
<dbReference type="eggNOG" id="COG0111">
    <property type="taxonomic scope" value="Bacteria"/>
</dbReference>
<dbReference type="HOGENOM" id="CLU_019796_4_0_10"/>
<dbReference type="UniPathway" id="UPA00244">
    <property type="reaction ID" value="UER00310"/>
</dbReference>
<dbReference type="Proteomes" id="UP000000588">
    <property type="component" value="Chromosome"/>
</dbReference>
<dbReference type="GO" id="GO:0005737">
    <property type="term" value="C:cytoplasm"/>
    <property type="evidence" value="ECO:0007669"/>
    <property type="project" value="UniProtKB-SubCell"/>
</dbReference>
<dbReference type="GO" id="GO:0033711">
    <property type="term" value="F:4-phosphoerythronate dehydrogenase activity"/>
    <property type="evidence" value="ECO:0007669"/>
    <property type="project" value="UniProtKB-EC"/>
</dbReference>
<dbReference type="GO" id="GO:0051287">
    <property type="term" value="F:NAD binding"/>
    <property type="evidence" value="ECO:0007669"/>
    <property type="project" value="InterPro"/>
</dbReference>
<dbReference type="GO" id="GO:0008615">
    <property type="term" value="P:pyridoxine biosynthetic process"/>
    <property type="evidence" value="ECO:0007669"/>
    <property type="project" value="UniProtKB-UniRule"/>
</dbReference>
<dbReference type="CDD" id="cd12158">
    <property type="entry name" value="ErythrP_dh"/>
    <property type="match status" value="1"/>
</dbReference>
<dbReference type="Gene3D" id="3.30.1370.170">
    <property type="match status" value="1"/>
</dbReference>
<dbReference type="Gene3D" id="3.40.50.720">
    <property type="entry name" value="NAD(P)-binding Rossmann-like Domain"/>
    <property type="match status" value="2"/>
</dbReference>
<dbReference type="HAMAP" id="MF_01825">
    <property type="entry name" value="PdxB"/>
    <property type="match status" value="1"/>
</dbReference>
<dbReference type="InterPro" id="IPR006139">
    <property type="entry name" value="D-isomer_2_OHA_DH_cat_dom"/>
</dbReference>
<dbReference type="InterPro" id="IPR029752">
    <property type="entry name" value="D-isomer_DH_CS1"/>
</dbReference>
<dbReference type="InterPro" id="IPR006140">
    <property type="entry name" value="D-isomer_DH_NAD-bd"/>
</dbReference>
<dbReference type="InterPro" id="IPR020921">
    <property type="entry name" value="Erythronate-4-P_DHase"/>
</dbReference>
<dbReference type="InterPro" id="IPR036291">
    <property type="entry name" value="NAD(P)-bd_dom_sf"/>
</dbReference>
<dbReference type="InterPro" id="IPR038251">
    <property type="entry name" value="PdxB_dimer_sf"/>
</dbReference>
<dbReference type="NCBIfam" id="NF001309">
    <property type="entry name" value="PRK00257.1"/>
    <property type="match status" value="1"/>
</dbReference>
<dbReference type="PANTHER" id="PTHR42938">
    <property type="entry name" value="FORMATE DEHYDROGENASE 1"/>
    <property type="match status" value="1"/>
</dbReference>
<dbReference type="PANTHER" id="PTHR42938:SF9">
    <property type="entry name" value="FORMATE DEHYDROGENASE 1"/>
    <property type="match status" value="1"/>
</dbReference>
<dbReference type="Pfam" id="PF00389">
    <property type="entry name" value="2-Hacid_dh"/>
    <property type="match status" value="1"/>
</dbReference>
<dbReference type="Pfam" id="PF02826">
    <property type="entry name" value="2-Hacid_dh_C"/>
    <property type="match status" value="1"/>
</dbReference>
<dbReference type="SUPFAM" id="SSF52283">
    <property type="entry name" value="Formate/glycerate dehydrogenase catalytic domain-like"/>
    <property type="match status" value="1"/>
</dbReference>
<dbReference type="SUPFAM" id="SSF51735">
    <property type="entry name" value="NAD(P)-binding Rossmann-fold domains"/>
    <property type="match status" value="1"/>
</dbReference>
<dbReference type="PROSITE" id="PS00065">
    <property type="entry name" value="D_2_HYDROXYACID_DH_1"/>
    <property type="match status" value="1"/>
</dbReference>
<name>PDXB_PORGI</name>
<sequence>MKIVAEASVPYLRGIVDPVADITYLHSDCFSPDTIRHARVLIVRSITKCTPALLQGTDVRLITTATAGFDHIDREYCESHGILWRNSPGCNATAVAQYVMCCLCRLALREGFSLKEKVMGIVGVGHVGGELKRLASAYGMEFLLCDPPRSEAEQDNSFLPLSRLVEQCDIISFHVPLTHEDPHATYHLIGEAFLRSCADKRPILINACRGAVADTQALIRAVKSGWLQALVIDCWEGEPDIDLSLLDLADIATPHIAGFSADGKANGARMCLEAITEVFGLEFPLLHTLAPPPPTHPIIDLSLFPDHRIERALLHTFDPLVPDRSLRASPKTFEEQRKAYPHPREMKAFTVVGATTEEAKILRGMDFIS</sequence>
<reference key="1">
    <citation type="journal article" date="2003" name="J. Bacteriol.">
        <title>Complete genome sequence of the oral pathogenic bacterium Porphyromonas gingivalis strain W83.</title>
        <authorList>
            <person name="Nelson K.E."/>
            <person name="Fleischmann R.D."/>
            <person name="DeBoy R.T."/>
            <person name="Paulsen I.T."/>
            <person name="Fouts D.E."/>
            <person name="Eisen J.A."/>
            <person name="Daugherty S.C."/>
            <person name="Dodson R.J."/>
            <person name="Durkin A.S."/>
            <person name="Gwinn M.L."/>
            <person name="Haft D.H."/>
            <person name="Kolonay J.F."/>
            <person name="Nelson W.C."/>
            <person name="Mason T.M."/>
            <person name="Tallon L."/>
            <person name="Gray J."/>
            <person name="Granger D."/>
            <person name="Tettelin H."/>
            <person name="Dong H."/>
            <person name="Galvin J.L."/>
            <person name="Duncan M.J."/>
            <person name="Dewhirst F.E."/>
            <person name="Fraser C.M."/>
        </authorList>
    </citation>
    <scope>NUCLEOTIDE SEQUENCE [LARGE SCALE GENOMIC DNA]</scope>
    <source>
        <strain>ATCC BAA-308 / W83</strain>
    </source>
</reference>
<proteinExistence type="inferred from homology"/>
<evidence type="ECO:0000255" key="1">
    <source>
        <dbReference type="HAMAP-Rule" id="MF_01825"/>
    </source>
</evidence>
<evidence type="ECO:0000305" key="2"/>
<feature type="chain" id="PRO_0000075981" description="Erythronate-4-phosphate dehydrogenase">
    <location>
        <begin position="1"/>
        <end position="369"/>
    </location>
</feature>
<feature type="active site" evidence="1">
    <location>
        <position position="209"/>
    </location>
</feature>
<feature type="active site" evidence="1">
    <location>
        <position position="238"/>
    </location>
</feature>
<feature type="active site" description="Proton donor" evidence="1">
    <location>
        <position position="255"/>
    </location>
</feature>
<feature type="binding site" evidence="1">
    <location>
        <position position="45"/>
    </location>
    <ligand>
        <name>substrate</name>
    </ligand>
</feature>
<feature type="binding site" evidence="1">
    <location>
        <position position="66"/>
    </location>
    <ligand>
        <name>substrate</name>
    </ligand>
</feature>
<feature type="binding site" evidence="1">
    <location>
        <position position="146"/>
    </location>
    <ligand>
        <name>NAD(+)</name>
        <dbReference type="ChEBI" id="CHEBI:57540"/>
    </ligand>
</feature>
<feature type="binding site" evidence="1">
    <location>
        <position position="233"/>
    </location>
    <ligand>
        <name>NAD(+)</name>
        <dbReference type="ChEBI" id="CHEBI:57540"/>
    </ligand>
</feature>
<feature type="binding site" evidence="1">
    <location>
        <position position="258"/>
    </location>
    <ligand>
        <name>NAD(+)</name>
        <dbReference type="ChEBI" id="CHEBI:57540"/>
    </ligand>
</feature>
<keyword id="KW-0963">Cytoplasm</keyword>
<keyword id="KW-0520">NAD</keyword>
<keyword id="KW-0560">Oxidoreductase</keyword>
<keyword id="KW-0664">Pyridoxine biosynthesis</keyword>
<keyword id="KW-1185">Reference proteome</keyword>
<comment type="function">
    <text evidence="1">Catalyzes the oxidation of erythronate-4-phosphate to 3-hydroxy-2-oxo-4-phosphonooxybutanoate.</text>
</comment>
<comment type="catalytic activity">
    <reaction evidence="1">
        <text>4-phospho-D-erythronate + NAD(+) = (R)-3-hydroxy-2-oxo-4-phosphooxybutanoate + NADH + H(+)</text>
        <dbReference type="Rhea" id="RHEA:18829"/>
        <dbReference type="ChEBI" id="CHEBI:15378"/>
        <dbReference type="ChEBI" id="CHEBI:57540"/>
        <dbReference type="ChEBI" id="CHEBI:57945"/>
        <dbReference type="ChEBI" id="CHEBI:58538"/>
        <dbReference type="ChEBI" id="CHEBI:58766"/>
        <dbReference type="EC" id="1.1.1.290"/>
    </reaction>
</comment>
<comment type="pathway">
    <text evidence="1">Cofactor biosynthesis; pyridoxine 5'-phosphate biosynthesis; pyridoxine 5'-phosphate from D-erythrose 4-phosphate: step 2/5.</text>
</comment>
<comment type="subunit">
    <text evidence="1">Homodimer.</text>
</comment>
<comment type="subcellular location">
    <subcellularLocation>
        <location evidence="1">Cytoplasm</location>
    </subcellularLocation>
</comment>
<comment type="similarity">
    <text evidence="1">Belongs to the D-isomer specific 2-hydroxyacid dehydrogenase family. PdxB subfamily.</text>
</comment>
<comment type="sequence caution" evidence="2">
    <conflict type="erroneous initiation">
        <sequence resource="EMBL-CDS" id="AAQ66310"/>
    </conflict>
</comment>